<reference key="1">
    <citation type="journal article" date="2009" name="J. Bacteriol.">
        <title>The genome of Burkholderia cenocepacia J2315, an epidemic pathogen of cystic fibrosis patients.</title>
        <authorList>
            <person name="Holden M.T."/>
            <person name="Seth-Smith H.M."/>
            <person name="Crossman L.C."/>
            <person name="Sebaihia M."/>
            <person name="Bentley S.D."/>
            <person name="Cerdeno-Tarraga A.M."/>
            <person name="Thomson N.R."/>
            <person name="Bason N."/>
            <person name="Quail M.A."/>
            <person name="Sharp S."/>
            <person name="Cherevach I."/>
            <person name="Churcher C."/>
            <person name="Goodhead I."/>
            <person name="Hauser H."/>
            <person name="Holroyd N."/>
            <person name="Mungall K."/>
            <person name="Scott P."/>
            <person name="Walker D."/>
            <person name="White B."/>
            <person name="Rose H."/>
            <person name="Iversen P."/>
            <person name="Mil-Homens D."/>
            <person name="Rocha E.P."/>
            <person name="Fialho A.M."/>
            <person name="Baldwin A."/>
            <person name="Dowson C."/>
            <person name="Barrell B.G."/>
            <person name="Govan J.R."/>
            <person name="Vandamme P."/>
            <person name="Hart C.A."/>
            <person name="Mahenthiralingam E."/>
            <person name="Parkhill J."/>
        </authorList>
    </citation>
    <scope>NUCLEOTIDE SEQUENCE [LARGE SCALE GENOMIC DNA]</scope>
    <source>
        <strain>ATCC BAA-245 / DSM 16553 / LMG 16656 / NCTC 13227 / J2315 / CF5610</strain>
    </source>
</reference>
<accession>B4EBY3</accession>
<proteinExistence type="inferred from homology"/>
<protein>
    <recommendedName>
        <fullName evidence="1">Protein RecA</fullName>
    </recommendedName>
    <alternativeName>
        <fullName evidence="1">Recombinase A</fullName>
    </alternativeName>
</protein>
<name>RECA_BURCJ</name>
<comment type="function">
    <text evidence="1">Can catalyze the hydrolysis of ATP in the presence of single-stranded DNA, the ATP-dependent uptake of single-stranded DNA by duplex DNA, and the ATP-dependent hybridization of homologous single-stranded DNAs. It interacts with LexA causing its activation and leading to its autocatalytic cleavage.</text>
</comment>
<comment type="subcellular location">
    <subcellularLocation>
        <location evidence="1">Cytoplasm</location>
    </subcellularLocation>
</comment>
<comment type="similarity">
    <text evidence="1">Belongs to the RecA family.</text>
</comment>
<evidence type="ECO:0000255" key="1">
    <source>
        <dbReference type="HAMAP-Rule" id="MF_00268"/>
    </source>
</evidence>
<gene>
    <name evidence="1" type="primary">recA</name>
    <name type="ordered locus">BceJ2315_09430</name>
    <name type="ORF">BCAL0953</name>
</gene>
<keyword id="KW-0067">ATP-binding</keyword>
<keyword id="KW-0963">Cytoplasm</keyword>
<keyword id="KW-0227">DNA damage</keyword>
<keyword id="KW-0233">DNA recombination</keyword>
<keyword id="KW-0234">DNA repair</keyword>
<keyword id="KW-0238">DNA-binding</keyword>
<keyword id="KW-0547">Nucleotide-binding</keyword>
<keyword id="KW-0742">SOS response</keyword>
<feature type="chain" id="PRO_1000114318" description="Protein RecA">
    <location>
        <begin position="1"/>
        <end position="347"/>
    </location>
</feature>
<feature type="binding site" evidence="1">
    <location>
        <begin position="66"/>
        <end position="73"/>
    </location>
    <ligand>
        <name>ATP</name>
        <dbReference type="ChEBI" id="CHEBI:30616"/>
    </ligand>
</feature>
<organism>
    <name type="scientific">Burkholderia cenocepacia (strain ATCC BAA-245 / DSM 16553 / LMG 16656 / NCTC 13227 / J2315 / CF5610)</name>
    <name type="common">Burkholderia cepacia (strain J2315)</name>
    <dbReference type="NCBI Taxonomy" id="216591"/>
    <lineage>
        <taxon>Bacteria</taxon>
        <taxon>Pseudomonadati</taxon>
        <taxon>Pseudomonadota</taxon>
        <taxon>Betaproteobacteria</taxon>
        <taxon>Burkholderiales</taxon>
        <taxon>Burkholderiaceae</taxon>
        <taxon>Burkholderia</taxon>
        <taxon>Burkholderia cepacia complex</taxon>
    </lineage>
</organism>
<dbReference type="EMBL" id="AM747720">
    <property type="protein sequence ID" value="CAR51260.1"/>
    <property type="molecule type" value="Genomic_DNA"/>
</dbReference>
<dbReference type="SMR" id="B4EBY3"/>
<dbReference type="KEGG" id="bcj:BCAL0953"/>
<dbReference type="eggNOG" id="COG0468">
    <property type="taxonomic scope" value="Bacteria"/>
</dbReference>
<dbReference type="HOGENOM" id="CLU_040469_3_2_4"/>
<dbReference type="Proteomes" id="UP000001035">
    <property type="component" value="Chromosome 1"/>
</dbReference>
<dbReference type="GO" id="GO:0005829">
    <property type="term" value="C:cytosol"/>
    <property type="evidence" value="ECO:0007669"/>
    <property type="project" value="TreeGrafter"/>
</dbReference>
<dbReference type="GO" id="GO:0005524">
    <property type="term" value="F:ATP binding"/>
    <property type="evidence" value="ECO:0007669"/>
    <property type="project" value="UniProtKB-UniRule"/>
</dbReference>
<dbReference type="GO" id="GO:0016887">
    <property type="term" value="F:ATP hydrolysis activity"/>
    <property type="evidence" value="ECO:0007669"/>
    <property type="project" value="InterPro"/>
</dbReference>
<dbReference type="GO" id="GO:0140664">
    <property type="term" value="F:ATP-dependent DNA damage sensor activity"/>
    <property type="evidence" value="ECO:0007669"/>
    <property type="project" value="InterPro"/>
</dbReference>
<dbReference type="GO" id="GO:0003684">
    <property type="term" value="F:damaged DNA binding"/>
    <property type="evidence" value="ECO:0007669"/>
    <property type="project" value="UniProtKB-UniRule"/>
</dbReference>
<dbReference type="GO" id="GO:0003697">
    <property type="term" value="F:single-stranded DNA binding"/>
    <property type="evidence" value="ECO:0007669"/>
    <property type="project" value="UniProtKB-UniRule"/>
</dbReference>
<dbReference type="GO" id="GO:0006310">
    <property type="term" value="P:DNA recombination"/>
    <property type="evidence" value="ECO:0007669"/>
    <property type="project" value="UniProtKB-UniRule"/>
</dbReference>
<dbReference type="GO" id="GO:0006281">
    <property type="term" value="P:DNA repair"/>
    <property type="evidence" value="ECO:0007669"/>
    <property type="project" value="UniProtKB-UniRule"/>
</dbReference>
<dbReference type="GO" id="GO:0009432">
    <property type="term" value="P:SOS response"/>
    <property type="evidence" value="ECO:0007669"/>
    <property type="project" value="UniProtKB-UniRule"/>
</dbReference>
<dbReference type="CDD" id="cd00983">
    <property type="entry name" value="RecA"/>
    <property type="match status" value="1"/>
</dbReference>
<dbReference type="FunFam" id="3.40.50.300:FF:000087">
    <property type="entry name" value="Recombinase RecA"/>
    <property type="match status" value="1"/>
</dbReference>
<dbReference type="Gene3D" id="3.40.50.300">
    <property type="entry name" value="P-loop containing nucleotide triphosphate hydrolases"/>
    <property type="match status" value="1"/>
</dbReference>
<dbReference type="HAMAP" id="MF_00268">
    <property type="entry name" value="RecA"/>
    <property type="match status" value="1"/>
</dbReference>
<dbReference type="InterPro" id="IPR003593">
    <property type="entry name" value="AAA+_ATPase"/>
</dbReference>
<dbReference type="InterPro" id="IPR013765">
    <property type="entry name" value="DNA_recomb/repair_RecA"/>
</dbReference>
<dbReference type="InterPro" id="IPR020584">
    <property type="entry name" value="DNA_recomb/repair_RecA_CS"/>
</dbReference>
<dbReference type="InterPro" id="IPR027417">
    <property type="entry name" value="P-loop_NTPase"/>
</dbReference>
<dbReference type="InterPro" id="IPR049261">
    <property type="entry name" value="RecA-like_C"/>
</dbReference>
<dbReference type="InterPro" id="IPR049428">
    <property type="entry name" value="RecA-like_N"/>
</dbReference>
<dbReference type="InterPro" id="IPR020588">
    <property type="entry name" value="RecA_ATP-bd"/>
</dbReference>
<dbReference type="InterPro" id="IPR023400">
    <property type="entry name" value="RecA_C_sf"/>
</dbReference>
<dbReference type="InterPro" id="IPR020587">
    <property type="entry name" value="RecA_monomer-monomer_interface"/>
</dbReference>
<dbReference type="NCBIfam" id="TIGR02012">
    <property type="entry name" value="tigrfam_recA"/>
    <property type="match status" value="1"/>
</dbReference>
<dbReference type="PANTHER" id="PTHR45900:SF1">
    <property type="entry name" value="MITOCHONDRIAL DNA REPAIR PROTEIN RECA HOMOLOG-RELATED"/>
    <property type="match status" value="1"/>
</dbReference>
<dbReference type="PANTHER" id="PTHR45900">
    <property type="entry name" value="RECA"/>
    <property type="match status" value="1"/>
</dbReference>
<dbReference type="Pfam" id="PF00154">
    <property type="entry name" value="RecA"/>
    <property type="match status" value="1"/>
</dbReference>
<dbReference type="Pfam" id="PF21096">
    <property type="entry name" value="RecA_C"/>
    <property type="match status" value="1"/>
</dbReference>
<dbReference type="PRINTS" id="PR00142">
    <property type="entry name" value="RECA"/>
</dbReference>
<dbReference type="SMART" id="SM00382">
    <property type="entry name" value="AAA"/>
    <property type="match status" value="1"/>
</dbReference>
<dbReference type="SUPFAM" id="SSF52540">
    <property type="entry name" value="P-loop containing nucleoside triphosphate hydrolases"/>
    <property type="match status" value="1"/>
</dbReference>
<dbReference type="SUPFAM" id="SSF54752">
    <property type="entry name" value="RecA protein, C-terminal domain"/>
    <property type="match status" value="1"/>
</dbReference>
<dbReference type="PROSITE" id="PS00321">
    <property type="entry name" value="RECA_1"/>
    <property type="match status" value="1"/>
</dbReference>
<dbReference type="PROSITE" id="PS50162">
    <property type="entry name" value="RECA_2"/>
    <property type="match status" value="1"/>
</dbReference>
<dbReference type="PROSITE" id="PS50163">
    <property type="entry name" value="RECA_3"/>
    <property type="match status" value="1"/>
</dbReference>
<sequence length="347" mass="37258">MTAEKSKALAAALAQIEKQFGKGSIMRMGDGEAAEDIQVVSTGSLGLDIALGVGGLPRGRVVEIYGPESSGKTTLTLQVIAELQKLGGTAAFIDAEHALDVQYAAKLGVNVPELLISQPDTGEQALEITDALVRSGSIDMIVIDSVAALVPKAEIEGEMGDSLPGLQARLMSQALRKLTGTIKRTNCLVIFINQIRMKIGVMFGNPETTTGGNALKFYSSVRLDIRRIGSIKKNDEVIGNETRVKVVKNKVSPPFREAIFDILYGEGISRQGEIIDLGVQAKIVDKAGAWYSYNGEKIGQGKDNAREFLRENPEIAREIENRIRESLGVVAMPDGAGNEAEAMDEEE</sequence>